<evidence type="ECO:0000256" key="1">
    <source>
        <dbReference type="SAM" id="MobiDB-lite"/>
    </source>
</evidence>
<evidence type="ECO:0000305" key="2"/>
<reference key="1">
    <citation type="journal article" date="1996" name="J. Bacteriol.">
        <title>Identification and characterization of additional flagellin genes from Vibrio anguillarum.</title>
        <authorList>
            <person name="McGee K."/>
            <person name="Hoerstedt P."/>
            <person name="Milton D.L."/>
        </authorList>
    </citation>
    <scope>NUCLEOTIDE SEQUENCE [GENOMIC DNA]</scope>
    <source>
        <strain>NB10 / Serotype O1</strain>
    </source>
</reference>
<dbReference type="EMBL" id="U52198">
    <property type="protein sequence ID" value="AAB09436.1"/>
    <property type="molecule type" value="Genomic_DNA"/>
</dbReference>
<dbReference type="SMR" id="Q56573"/>
<dbReference type="STRING" id="55601.AA407_04210"/>
<dbReference type="Gene3D" id="3.30.160.170">
    <property type="entry name" value="FlaG-like"/>
    <property type="match status" value="1"/>
</dbReference>
<dbReference type="InterPro" id="IPR005186">
    <property type="entry name" value="FlaG"/>
</dbReference>
<dbReference type="InterPro" id="IPR035924">
    <property type="entry name" value="FlaG-like_sf"/>
</dbReference>
<dbReference type="NCBIfam" id="NF006465">
    <property type="entry name" value="PRK08868.1"/>
    <property type="match status" value="1"/>
</dbReference>
<dbReference type="PANTHER" id="PTHR37166">
    <property type="entry name" value="PROTEIN FLAG"/>
    <property type="match status" value="1"/>
</dbReference>
<dbReference type="PANTHER" id="PTHR37166:SF1">
    <property type="entry name" value="PROTEIN FLAG"/>
    <property type="match status" value="1"/>
</dbReference>
<dbReference type="Pfam" id="PF03646">
    <property type="entry name" value="FlaG"/>
    <property type="match status" value="1"/>
</dbReference>
<dbReference type="SUPFAM" id="SSF160214">
    <property type="entry name" value="FlaG-like"/>
    <property type="match status" value="1"/>
</dbReference>
<name>FLAG_VIBAN</name>
<gene>
    <name type="primary">flaG</name>
</gene>
<protein>
    <recommendedName>
        <fullName>Protein FlaG</fullName>
    </recommendedName>
</protein>
<sequence>MEIPSYTSNIQPYGSQSGIKFASENDGATRASSKQNEVNRTEQLRNRQNQSVEAAIELAQQREQINKSERAKMVEQMNEFISSINKDLAFRVDEESGRDVVTIYEASTGDIIRQIPNEEMLEVLRRLARQKDHS</sequence>
<comment type="similarity">
    <text evidence="2">To FlaG in other Vibrio species.</text>
</comment>
<accession>Q56573</accession>
<organism>
    <name type="scientific">Vibrio anguillarum</name>
    <name type="common">Listonella anguillarum</name>
    <dbReference type="NCBI Taxonomy" id="55601"/>
    <lineage>
        <taxon>Bacteria</taxon>
        <taxon>Pseudomonadati</taxon>
        <taxon>Pseudomonadota</taxon>
        <taxon>Gammaproteobacteria</taxon>
        <taxon>Vibrionales</taxon>
        <taxon>Vibrionaceae</taxon>
        <taxon>Vibrio</taxon>
    </lineage>
</organism>
<proteinExistence type="predicted"/>
<feature type="chain" id="PRO_0000087275" description="Protein FlaG">
    <location>
        <begin position="1"/>
        <end position="134" status="greater than"/>
    </location>
</feature>
<feature type="region of interest" description="Disordered" evidence="1">
    <location>
        <begin position="1"/>
        <end position="49"/>
    </location>
</feature>
<feature type="compositionally biased region" description="Polar residues" evidence="1">
    <location>
        <begin position="1"/>
        <end position="18"/>
    </location>
</feature>
<feature type="non-terminal residue">
    <location>
        <position position="134"/>
    </location>
</feature>